<keyword id="KW-0131">Cell cycle</keyword>
<keyword id="KW-0132">Cell division</keyword>
<keyword id="KW-0143">Chaperone</keyword>
<keyword id="KW-0963">Cytoplasm</keyword>
<keyword id="KW-0413">Isomerase</keyword>
<keyword id="KW-0697">Rotamase</keyword>
<accession>C1ETR9</accession>
<gene>
    <name evidence="1" type="primary">tig</name>
    <name type="ordered locus">BCA_4585</name>
</gene>
<name>TIG_BACC3</name>
<feature type="chain" id="PRO_1000198141" description="Trigger factor">
    <location>
        <begin position="1"/>
        <end position="425"/>
    </location>
</feature>
<feature type="domain" description="PPIase FKBP-type" evidence="1">
    <location>
        <begin position="163"/>
        <end position="248"/>
    </location>
</feature>
<organism>
    <name type="scientific">Bacillus cereus (strain 03BB102)</name>
    <dbReference type="NCBI Taxonomy" id="572264"/>
    <lineage>
        <taxon>Bacteria</taxon>
        <taxon>Bacillati</taxon>
        <taxon>Bacillota</taxon>
        <taxon>Bacilli</taxon>
        <taxon>Bacillales</taxon>
        <taxon>Bacillaceae</taxon>
        <taxon>Bacillus</taxon>
        <taxon>Bacillus cereus group</taxon>
    </lineage>
</organism>
<proteinExistence type="inferred from homology"/>
<sequence>MAAKWEKLEGNVGVLTIEVDAKEVNNSIDAAFKKVVKTINVPGFRKGKMPRPLFEQRFGIESLYQDALDIILPKAYGEAIDEAGIFPVAHPEIDIEKFEKNANLIFTAKVTVKPEVKLGEYKGLAVEKVETTVTDEDVENELKSLQERQAELVVKEEGTVENGDTAVIDFEGFVDGEAFEGGKGENYSLAIGSGTFIPGFEEQVIGLKSGESKDVEVSFPEEYHAAELAGKPATFKVTVHEIKTKELPELNDEFAKEADEAVATLDELKAKLRTNLEEGKKHEAEHKVRDEVVELAAANAEIDIPEAMIDTELDRMVREFEQRLSQQGMNLELYYQFTGTDADKLKEQMKEDAQKRVRINLVLEAIIEAENIEVTEEEVTAEVEKMAEMYGMPVDAIKQALGSVDALAEDLKVRKAVDFLVENAA</sequence>
<dbReference type="EC" id="5.2.1.8" evidence="1"/>
<dbReference type="EMBL" id="CP001407">
    <property type="protein sequence ID" value="ACO26328.1"/>
    <property type="molecule type" value="Genomic_DNA"/>
</dbReference>
<dbReference type="RefSeq" id="WP_000729253.1">
    <property type="nucleotide sequence ID" value="NZ_CP009318.1"/>
</dbReference>
<dbReference type="SMR" id="C1ETR9"/>
<dbReference type="GeneID" id="45024345"/>
<dbReference type="KEGG" id="bcx:BCA_4585"/>
<dbReference type="PATRIC" id="fig|572264.18.peg.4533"/>
<dbReference type="Proteomes" id="UP000002210">
    <property type="component" value="Chromosome"/>
</dbReference>
<dbReference type="GO" id="GO:0005737">
    <property type="term" value="C:cytoplasm"/>
    <property type="evidence" value="ECO:0007669"/>
    <property type="project" value="UniProtKB-SubCell"/>
</dbReference>
<dbReference type="GO" id="GO:0003755">
    <property type="term" value="F:peptidyl-prolyl cis-trans isomerase activity"/>
    <property type="evidence" value="ECO:0007669"/>
    <property type="project" value="UniProtKB-UniRule"/>
</dbReference>
<dbReference type="GO" id="GO:0044183">
    <property type="term" value="F:protein folding chaperone"/>
    <property type="evidence" value="ECO:0007669"/>
    <property type="project" value="TreeGrafter"/>
</dbReference>
<dbReference type="GO" id="GO:0043022">
    <property type="term" value="F:ribosome binding"/>
    <property type="evidence" value="ECO:0007669"/>
    <property type="project" value="TreeGrafter"/>
</dbReference>
<dbReference type="GO" id="GO:0051083">
    <property type="term" value="P:'de novo' cotranslational protein folding"/>
    <property type="evidence" value="ECO:0007669"/>
    <property type="project" value="TreeGrafter"/>
</dbReference>
<dbReference type="GO" id="GO:0051301">
    <property type="term" value="P:cell division"/>
    <property type="evidence" value="ECO:0007669"/>
    <property type="project" value="UniProtKB-KW"/>
</dbReference>
<dbReference type="GO" id="GO:0061077">
    <property type="term" value="P:chaperone-mediated protein folding"/>
    <property type="evidence" value="ECO:0007669"/>
    <property type="project" value="TreeGrafter"/>
</dbReference>
<dbReference type="GO" id="GO:0015031">
    <property type="term" value="P:protein transport"/>
    <property type="evidence" value="ECO:0007669"/>
    <property type="project" value="UniProtKB-UniRule"/>
</dbReference>
<dbReference type="GO" id="GO:0043335">
    <property type="term" value="P:protein unfolding"/>
    <property type="evidence" value="ECO:0007669"/>
    <property type="project" value="TreeGrafter"/>
</dbReference>
<dbReference type="FunFam" id="3.10.50.40:FF:000001">
    <property type="entry name" value="Trigger factor"/>
    <property type="match status" value="1"/>
</dbReference>
<dbReference type="FunFam" id="3.30.70.1050:FF:000002">
    <property type="entry name" value="Trigger factor"/>
    <property type="match status" value="1"/>
</dbReference>
<dbReference type="Gene3D" id="3.10.50.40">
    <property type="match status" value="1"/>
</dbReference>
<dbReference type="Gene3D" id="3.30.70.1050">
    <property type="entry name" value="Trigger factor ribosome-binding domain"/>
    <property type="match status" value="1"/>
</dbReference>
<dbReference type="Gene3D" id="1.10.3120.10">
    <property type="entry name" value="Trigger factor, C-terminal domain"/>
    <property type="match status" value="1"/>
</dbReference>
<dbReference type="HAMAP" id="MF_00303">
    <property type="entry name" value="Trigger_factor_Tig"/>
    <property type="match status" value="1"/>
</dbReference>
<dbReference type="InterPro" id="IPR046357">
    <property type="entry name" value="PPIase_dom_sf"/>
</dbReference>
<dbReference type="InterPro" id="IPR001179">
    <property type="entry name" value="PPIase_FKBP_dom"/>
</dbReference>
<dbReference type="InterPro" id="IPR005215">
    <property type="entry name" value="Trig_fac"/>
</dbReference>
<dbReference type="InterPro" id="IPR008880">
    <property type="entry name" value="Trigger_fac_C"/>
</dbReference>
<dbReference type="InterPro" id="IPR037041">
    <property type="entry name" value="Trigger_fac_C_sf"/>
</dbReference>
<dbReference type="InterPro" id="IPR008881">
    <property type="entry name" value="Trigger_fac_ribosome-bd_bac"/>
</dbReference>
<dbReference type="InterPro" id="IPR036611">
    <property type="entry name" value="Trigger_fac_ribosome-bd_sf"/>
</dbReference>
<dbReference type="InterPro" id="IPR027304">
    <property type="entry name" value="Trigger_fact/SurA_dom_sf"/>
</dbReference>
<dbReference type="NCBIfam" id="TIGR00115">
    <property type="entry name" value="tig"/>
    <property type="match status" value="1"/>
</dbReference>
<dbReference type="PANTHER" id="PTHR30560">
    <property type="entry name" value="TRIGGER FACTOR CHAPERONE AND PEPTIDYL-PROLYL CIS/TRANS ISOMERASE"/>
    <property type="match status" value="1"/>
</dbReference>
<dbReference type="PANTHER" id="PTHR30560:SF3">
    <property type="entry name" value="TRIGGER FACTOR-LIKE PROTEIN TIG, CHLOROPLASTIC"/>
    <property type="match status" value="1"/>
</dbReference>
<dbReference type="Pfam" id="PF00254">
    <property type="entry name" value="FKBP_C"/>
    <property type="match status" value="1"/>
</dbReference>
<dbReference type="Pfam" id="PF05698">
    <property type="entry name" value="Trigger_C"/>
    <property type="match status" value="1"/>
</dbReference>
<dbReference type="Pfam" id="PF05697">
    <property type="entry name" value="Trigger_N"/>
    <property type="match status" value="1"/>
</dbReference>
<dbReference type="PIRSF" id="PIRSF003095">
    <property type="entry name" value="Trigger_factor"/>
    <property type="match status" value="1"/>
</dbReference>
<dbReference type="SUPFAM" id="SSF54534">
    <property type="entry name" value="FKBP-like"/>
    <property type="match status" value="1"/>
</dbReference>
<dbReference type="SUPFAM" id="SSF109998">
    <property type="entry name" value="Triger factor/SurA peptide-binding domain-like"/>
    <property type="match status" value="1"/>
</dbReference>
<dbReference type="SUPFAM" id="SSF102735">
    <property type="entry name" value="Trigger factor ribosome-binding domain"/>
    <property type="match status" value="1"/>
</dbReference>
<dbReference type="PROSITE" id="PS50059">
    <property type="entry name" value="FKBP_PPIASE"/>
    <property type="match status" value="1"/>
</dbReference>
<comment type="function">
    <text evidence="1">Involved in protein export. Acts as a chaperone by maintaining the newly synthesized protein in an open conformation. Functions as a peptidyl-prolyl cis-trans isomerase.</text>
</comment>
<comment type="catalytic activity">
    <reaction evidence="1">
        <text>[protein]-peptidylproline (omega=180) = [protein]-peptidylproline (omega=0)</text>
        <dbReference type="Rhea" id="RHEA:16237"/>
        <dbReference type="Rhea" id="RHEA-COMP:10747"/>
        <dbReference type="Rhea" id="RHEA-COMP:10748"/>
        <dbReference type="ChEBI" id="CHEBI:83833"/>
        <dbReference type="ChEBI" id="CHEBI:83834"/>
        <dbReference type="EC" id="5.2.1.8"/>
    </reaction>
</comment>
<comment type="subcellular location">
    <subcellularLocation>
        <location>Cytoplasm</location>
    </subcellularLocation>
    <text evidence="1">About half TF is bound to the ribosome near the polypeptide exit tunnel while the other half is free in the cytoplasm.</text>
</comment>
<comment type="domain">
    <text evidence="1">Consists of 3 domains; the N-terminus binds the ribosome, the middle domain has PPIase activity, while the C-terminus has intrinsic chaperone activity on its own.</text>
</comment>
<comment type="similarity">
    <text evidence="1">Belongs to the FKBP-type PPIase family. Tig subfamily.</text>
</comment>
<evidence type="ECO:0000255" key="1">
    <source>
        <dbReference type="HAMAP-Rule" id="MF_00303"/>
    </source>
</evidence>
<reference key="1">
    <citation type="submission" date="2009-02" db="EMBL/GenBank/DDBJ databases">
        <title>Genome sequence of Bacillus cereus 03BB102.</title>
        <authorList>
            <person name="Dodson R.J."/>
            <person name="Jackson P."/>
            <person name="Munk A.C."/>
            <person name="Brettin T."/>
            <person name="Bruce D."/>
            <person name="Detter C."/>
            <person name="Tapia R."/>
            <person name="Han C."/>
            <person name="Sutton G."/>
            <person name="Sims D."/>
        </authorList>
    </citation>
    <scope>NUCLEOTIDE SEQUENCE [LARGE SCALE GENOMIC DNA]</scope>
    <source>
        <strain>03BB102</strain>
    </source>
</reference>
<protein>
    <recommendedName>
        <fullName evidence="1">Trigger factor</fullName>
        <shortName evidence="1">TF</shortName>
        <ecNumber evidence="1">5.2.1.8</ecNumber>
    </recommendedName>
    <alternativeName>
        <fullName evidence="1">PPIase</fullName>
    </alternativeName>
</protein>